<comment type="function">
    <text evidence="1">Catalyzes the 2'-O-methylation at nucleotide C2498 in 23S rRNA.</text>
</comment>
<comment type="catalytic activity">
    <reaction evidence="1">
        <text>cytidine(2498) in 23S rRNA + S-adenosyl-L-methionine = 2'-O-methylcytidine(2498) in 23S rRNA + S-adenosyl-L-homocysteine + H(+)</text>
        <dbReference type="Rhea" id="RHEA:42788"/>
        <dbReference type="Rhea" id="RHEA-COMP:10244"/>
        <dbReference type="Rhea" id="RHEA-COMP:10245"/>
        <dbReference type="ChEBI" id="CHEBI:15378"/>
        <dbReference type="ChEBI" id="CHEBI:57856"/>
        <dbReference type="ChEBI" id="CHEBI:59789"/>
        <dbReference type="ChEBI" id="CHEBI:74495"/>
        <dbReference type="ChEBI" id="CHEBI:82748"/>
        <dbReference type="EC" id="2.1.1.186"/>
    </reaction>
</comment>
<comment type="subunit">
    <text evidence="1">Monomer.</text>
</comment>
<comment type="subcellular location">
    <subcellularLocation>
        <location evidence="1">Cytoplasm</location>
    </subcellularLocation>
</comment>
<comment type="similarity">
    <text evidence="1">Belongs to the class I-like SAM-binding methyltransferase superfamily. RNA methyltransferase RlmE family. RlmM subfamily.</text>
</comment>
<sequence>MNKVVLLCRPGFEKECAAEITDKAGKREIFGFARVKENAGYVIYECYQPEDGEKLISELPFSSLIFARQWFVVGELLQHLPPEDRITPIVGMLQGVVEKGGELRVEVADTNESKELMKFCRKFTVPLRAALRDVGVLTNYETPKRPVVHVFFIAPGCCYTGYSFAHNNSPFYMGIPRLKFPSDAPSRSTLKLEEALHVFIPEDEWDERLANGMYAVDLGACPGGWTYQLVKRNMWVYSVDNGPMAQSLMDTGQVTWLREDGFRYRPNRNNISWMVCDMVEKPAKVTALMAQWLVNGWCRETIFNLKLPMKKRYEEVSHNLAYLQAQLDEHGVNAQIQARQLYHDREEVTVHVRRLWAAVGGRRDER</sequence>
<gene>
    <name evidence="1" type="primary">rlmM</name>
    <name type="ordered locus">SCH_2920</name>
</gene>
<feature type="chain" id="PRO_0000070422" description="Ribosomal RNA large subunit methyltransferase M">
    <location>
        <begin position="1"/>
        <end position="366"/>
    </location>
</feature>
<feature type="active site" description="Proton acceptor" evidence="1">
    <location>
        <position position="306"/>
    </location>
</feature>
<feature type="binding site" evidence="1">
    <location>
        <position position="188"/>
    </location>
    <ligand>
        <name>S-adenosyl-L-methionine</name>
        <dbReference type="ChEBI" id="CHEBI:59789"/>
    </ligand>
</feature>
<feature type="binding site" evidence="1">
    <location>
        <begin position="221"/>
        <end position="224"/>
    </location>
    <ligand>
        <name>S-adenosyl-L-methionine</name>
        <dbReference type="ChEBI" id="CHEBI:59789"/>
    </ligand>
</feature>
<feature type="binding site" evidence="1">
    <location>
        <position position="240"/>
    </location>
    <ligand>
        <name>S-adenosyl-L-methionine</name>
        <dbReference type="ChEBI" id="CHEBI:59789"/>
    </ligand>
</feature>
<feature type="binding site" evidence="1">
    <location>
        <position position="260"/>
    </location>
    <ligand>
        <name>S-adenosyl-L-methionine</name>
        <dbReference type="ChEBI" id="CHEBI:59789"/>
    </ligand>
</feature>
<feature type="binding site" evidence="1">
    <location>
        <position position="277"/>
    </location>
    <ligand>
        <name>S-adenosyl-L-methionine</name>
        <dbReference type="ChEBI" id="CHEBI:59789"/>
    </ligand>
</feature>
<keyword id="KW-0963">Cytoplasm</keyword>
<keyword id="KW-0489">Methyltransferase</keyword>
<keyword id="KW-0698">rRNA processing</keyword>
<keyword id="KW-0949">S-adenosyl-L-methionine</keyword>
<keyword id="KW-0808">Transferase</keyword>
<proteinExistence type="inferred from homology"/>
<organism>
    <name type="scientific">Salmonella choleraesuis (strain SC-B67)</name>
    <dbReference type="NCBI Taxonomy" id="321314"/>
    <lineage>
        <taxon>Bacteria</taxon>
        <taxon>Pseudomonadati</taxon>
        <taxon>Pseudomonadota</taxon>
        <taxon>Gammaproteobacteria</taxon>
        <taxon>Enterobacterales</taxon>
        <taxon>Enterobacteriaceae</taxon>
        <taxon>Salmonella</taxon>
    </lineage>
</organism>
<protein>
    <recommendedName>
        <fullName evidence="1">Ribosomal RNA large subunit methyltransferase M</fullName>
        <ecNumber evidence="1">2.1.1.186</ecNumber>
    </recommendedName>
    <alternativeName>
        <fullName evidence="1">23S rRNA (cytidine2498-2'-O)-methyltransferase</fullName>
    </alternativeName>
    <alternativeName>
        <fullName evidence="1">23S rRNA 2'-O-ribose methyltransferase RlmM</fullName>
    </alternativeName>
</protein>
<dbReference type="EC" id="2.1.1.186" evidence="1"/>
<dbReference type="EMBL" id="AE017220">
    <property type="protein sequence ID" value="AAX66826.1"/>
    <property type="molecule type" value="Genomic_DNA"/>
</dbReference>
<dbReference type="RefSeq" id="WP_001045498.1">
    <property type="nucleotide sequence ID" value="NC_006905.1"/>
</dbReference>
<dbReference type="SMR" id="Q57KD6"/>
<dbReference type="KEGG" id="sec:SCH_2920"/>
<dbReference type="HOGENOM" id="CLU_043780_0_0_6"/>
<dbReference type="Proteomes" id="UP000000538">
    <property type="component" value="Chromosome"/>
</dbReference>
<dbReference type="GO" id="GO:0005737">
    <property type="term" value="C:cytoplasm"/>
    <property type="evidence" value="ECO:0007669"/>
    <property type="project" value="UniProtKB-SubCell"/>
</dbReference>
<dbReference type="GO" id="GO:0008757">
    <property type="term" value="F:S-adenosylmethionine-dependent methyltransferase activity"/>
    <property type="evidence" value="ECO:0007669"/>
    <property type="project" value="UniProtKB-UniRule"/>
</dbReference>
<dbReference type="GO" id="GO:0032259">
    <property type="term" value="P:methylation"/>
    <property type="evidence" value="ECO:0007669"/>
    <property type="project" value="UniProtKB-KW"/>
</dbReference>
<dbReference type="GO" id="GO:0006364">
    <property type="term" value="P:rRNA processing"/>
    <property type="evidence" value="ECO:0007669"/>
    <property type="project" value="UniProtKB-UniRule"/>
</dbReference>
<dbReference type="FunFam" id="3.30.2300.20:FF:000001">
    <property type="entry name" value="Ribosomal RNA large subunit methyltransferase M"/>
    <property type="match status" value="1"/>
</dbReference>
<dbReference type="FunFam" id="3.30.70.2810:FF:000001">
    <property type="entry name" value="Ribosomal RNA large subunit methyltransferase M"/>
    <property type="match status" value="1"/>
</dbReference>
<dbReference type="FunFam" id="3.40.50.150:FF:000020">
    <property type="entry name" value="Ribosomal RNA large subunit methyltransferase M"/>
    <property type="match status" value="1"/>
</dbReference>
<dbReference type="Gene3D" id="3.30.2300.20">
    <property type="match status" value="1"/>
</dbReference>
<dbReference type="Gene3D" id="3.30.70.2810">
    <property type="match status" value="1"/>
</dbReference>
<dbReference type="Gene3D" id="3.40.50.150">
    <property type="entry name" value="Vaccinia Virus protein VP39"/>
    <property type="match status" value="1"/>
</dbReference>
<dbReference type="HAMAP" id="MF_01551">
    <property type="entry name" value="23SrRNA_methyltr_M"/>
    <property type="match status" value="1"/>
</dbReference>
<dbReference type="InterPro" id="IPR040739">
    <property type="entry name" value="RlmM_FDX"/>
</dbReference>
<dbReference type="InterPro" id="IPR048646">
    <property type="entry name" value="RlmM_THUMP-like"/>
</dbReference>
<dbReference type="InterPro" id="IPR002877">
    <property type="entry name" value="RNA_MeTrfase_FtsJ_dom"/>
</dbReference>
<dbReference type="InterPro" id="IPR011224">
    <property type="entry name" value="rRNA_MeTrfase_M"/>
</dbReference>
<dbReference type="InterPro" id="IPR029063">
    <property type="entry name" value="SAM-dependent_MTases_sf"/>
</dbReference>
<dbReference type="NCBIfam" id="NF008734">
    <property type="entry name" value="PRK11760.1"/>
    <property type="match status" value="1"/>
</dbReference>
<dbReference type="PANTHER" id="PTHR37524">
    <property type="entry name" value="RIBOSOMAL RNA LARGE SUBUNIT METHYLTRANSFERASE M"/>
    <property type="match status" value="1"/>
</dbReference>
<dbReference type="PANTHER" id="PTHR37524:SF2">
    <property type="entry name" value="RIBOSOMAL RNA METHYLTRANSFERASE FTSJ DOMAIN-CONTAINING PROTEIN"/>
    <property type="match status" value="1"/>
</dbReference>
<dbReference type="Pfam" id="PF01728">
    <property type="entry name" value="FtsJ"/>
    <property type="match status" value="1"/>
</dbReference>
<dbReference type="Pfam" id="PF18125">
    <property type="entry name" value="RlmM_FDX"/>
    <property type="match status" value="1"/>
</dbReference>
<dbReference type="Pfam" id="PF21239">
    <property type="entry name" value="RLMM_N"/>
    <property type="match status" value="1"/>
</dbReference>
<dbReference type="PIRSF" id="PIRSF028774">
    <property type="entry name" value="UCP028774"/>
    <property type="match status" value="1"/>
</dbReference>
<dbReference type="SUPFAM" id="SSF53335">
    <property type="entry name" value="S-adenosyl-L-methionine-dependent methyltransferases"/>
    <property type="match status" value="1"/>
</dbReference>
<accession>Q57KD6</accession>
<reference key="1">
    <citation type="journal article" date="2005" name="Nucleic Acids Res.">
        <title>The genome sequence of Salmonella enterica serovar Choleraesuis, a highly invasive and resistant zoonotic pathogen.</title>
        <authorList>
            <person name="Chiu C.-H."/>
            <person name="Tang P."/>
            <person name="Chu C."/>
            <person name="Hu S."/>
            <person name="Bao Q."/>
            <person name="Yu J."/>
            <person name="Chou Y.-Y."/>
            <person name="Wang H.-S."/>
            <person name="Lee Y.-S."/>
        </authorList>
    </citation>
    <scope>NUCLEOTIDE SEQUENCE [LARGE SCALE GENOMIC DNA]</scope>
    <source>
        <strain>SC-B67</strain>
    </source>
</reference>
<evidence type="ECO:0000255" key="1">
    <source>
        <dbReference type="HAMAP-Rule" id="MF_01551"/>
    </source>
</evidence>
<name>RLMM_SALCH</name>